<name>ARNC_ECOLI</name>
<keyword id="KW-0046">Antibiotic resistance</keyword>
<keyword id="KW-0997">Cell inner membrane</keyword>
<keyword id="KW-1003">Cell membrane</keyword>
<keyword id="KW-0328">Glycosyltransferase</keyword>
<keyword id="KW-0441">Lipid A biosynthesis</keyword>
<keyword id="KW-0444">Lipid biosynthesis</keyword>
<keyword id="KW-0443">Lipid metabolism</keyword>
<keyword id="KW-0448">Lipopolysaccharide biosynthesis</keyword>
<keyword id="KW-0472">Membrane</keyword>
<keyword id="KW-1185">Reference proteome</keyword>
<keyword id="KW-0808">Transferase</keyword>
<keyword id="KW-0812">Transmembrane</keyword>
<keyword id="KW-1133">Transmembrane helix</keyword>
<protein>
    <recommendedName>
        <fullName>Undecaprenyl-phosphate 4-deoxy-4-formamido-L-arabinose transferase</fullName>
        <ecNumber>2.4.2.53</ecNumber>
    </recommendedName>
    <alternativeName>
        <fullName>Polymyxin resistance protein PmrF</fullName>
    </alternativeName>
    <alternativeName>
        <fullName>Undecaprenyl-phosphate Ara4FN transferase</fullName>
        <shortName>Ara4FN transferase</shortName>
    </alternativeName>
</protein>
<accession>P77757</accession>
<accession>P78179</accession>
<accession>Q4U4N1</accession>
<organism>
    <name type="scientific">Escherichia coli (strain K12)</name>
    <dbReference type="NCBI Taxonomy" id="83333"/>
    <lineage>
        <taxon>Bacteria</taxon>
        <taxon>Pseudomonadati</taxon>
        <taxon>Pseudomonadota</taxon>
        <taxon>Gammaproteobacteria</taxon>
        <taxon>Enterobacterales</taxon>
        <taxon>Enterobacteriaceae</taxon>
        <taxon>Escherichia</taxon>
    </lineage>
</organism>
<comment type="function">
    <text evidence="3">Catalyzes the transfer of 4-deoxy-4-formamido-L-arabinose from UDP to undecaprenyl phosphate. The modified arabinose is attached to lipid A and is required for resistance to polymyxin and cationic antimicrobial peptides.</text>
</comment>
<comment type="catalytic activity">
    <reaction evidence="4">
        <text>UDP-4-deoxy-4-formamido-beta-L-arabinose + di-trans,octa-cis-undecaprenyl phosphate = 4-deoxy-4-formamido-alpha-L-arabinopyranosyl di-trans,octa-cis-undecaprenyl phosphate + UDP</text>
        <dbReference type="Rhea" id="RHEA:27722"/>
        <dbReference type="ChEBI" id="CHEBI:58223"/>
        <dbReference type="ChEBI" id="CHEBI:58709"/>
        <dbReference type="ChEBI" id="CHEBI:58909"/>
        <dbReference type="ChEBI" id="CHEBI:60392"/>
        <dbReference type="EC" id="2.4.2.53"/>
    </reaction>
</comment>
<comment type="pathway">
    <text evidence="5">Glycolipid biosynthesis; 4-amino-4-deoxy-alpha-L-arabinose undecaprenyl phosphate biosynthesis; 4-amino-4-deoxy-alpha-L-arabinose undecaprenyl phosphate from UDP-4-deoxy-4-formamido-beta-L-arabinose and undecaprenyl phosphate: step 1/2.</text>
</comment>
<comment type="pathway">
    <text evidence="5">Bacterial outer membrane biogenesis; lipopolysaccharide biosynthesis.</text>
</comment>
<comment type="subcellular location">
    <subcellularLocation>
        <location>Cell inner membrane</location>
        <topology>Multi-pass membrane protein</topology>
    </subcellularLocation>
</comment>
<comment type="induction">
    <text evidence="1">Induced by BasR.</text>
</comment>
<comment type="similarity">
    <text evidence="6">Belongs to the glycosyltransferase 2 family.</text>
</comment>
<evidence type="ECO:0000250" key="1"/>
<evidence type="ECO:0000255" key="2"/>
<evidence type="ECO:0000269" key="3">
    <source>
    </source>
</evidence>
<evidence type="ECO:0000269" key="4">
    <source>
    </source>
</evidence>
<evidence type="ECO:0000269" key="5">
    <source>
    </source>
</evidence>
<evidence type="ECO:0000305" key="6"/>
<sequence length="322" mass="36339">MFEIHPVKKVSVVIPVYNEQESLPELIRRTTTACESLGKEYEILLIDDGSSDNSAHMLVEASQAENSHIVSILLNRNYGQHSAIMAGFSHVTGDLIITLDADLQNPPEEIPRLVAKADEGYDVVGTVRQNRQDSWFRKTASKMINRLIQRTTGKAMGDYGCMLRAYRRHIVDAMLHCHERSTFIPILANIFARRAIEIPVHHAEREFGESKYSFMRLINLMYDLVTCLTTTPLRMLSLLGSIIAIGGFSIAVLLVILRLTFGPQWAAEGVFMLFAVLFTFIGAQFIGMGLLGEYIGRIYTDVRARPRYFVQQVIRPSSKENE</sequence>
<feature type="chain" id="PRO_0000059195" description="Undecaprenyl-phosphate 4-deoxy-4-formamido-L-arabinose transferase">
    <location>
        <begin position="1"/>
        <end position="322"/>
    </location>
</feature>
<feature type="topological domain" description="Cytoplasmic" evidence="2">
    <location>
        <begin position="1"/>
        <end position="235"/>
    </location>
</feature>
<feature type="transmembrane region" description="Helical" evidence="2">
    <location>
        <begin position="236"/>
        <end position="256"/>
    </location>
</feature>
<feature type="topological domain" description="Periplasmic" evidence="2">
    <location>
        <begin position="257"/>
        <end position="269"/>
    </location>
</feature>
<feature type="transmembrane region" description="Helical" evidence="2">
    <location>
        <begin position="270"/>
        <end position="290"/>
    </location>
</feature>
<feature type="topological domain" description="Cytoplasmic" evidence="2">
    <location>
        <begin position="291"/>
        <end position="322"/>
    </location>
</feature>
<gene>
    <name type="primary">arnC</name>
    <name type="synonym">pmrF</name>
    <name type="synonym">yfbF</name>
    <name type="ordered locus">b2254</name>
    <name type="ordered locus">JW2248</name>
</gene>
<reference key="1">
    <citation type="journal article" date="2005" name="J. Biol. Chem.">
        <title>A formyltransferase required for polymyxin resistance in Escherichia coli and the modification of lipid A with 4-amino-4-deoxy-L-arabinose: identification and function of UDP-4-deoxy-4-formamido-L-arabinose.</title>
        <authorList>
            <person name="Breazeale S.D."/>
            <person name="Ribeiro A.A."/>
            <person name="McClerren A.L."/>
            <person name="Raetz C.R.H."/>
        </authorList>
    </citation>
    <scope>NUCLEOTIDE SEQUENCE [GENOMIC DNA]</scope>
    <scope>SUBSTRATE SPECIFICITY</scope>
    <scope>CATALYTIC ACTIVITY</scope>
    <source>
        <strain>K12 / W3110 / ATCC 27325 / DSM 5911</strain>
    </source>
</reference>
<reference key="2">
    <citation type="journal article" date="1997" name="DNA Res.">
        <title>Construction of a contiguous 874-kb sequence of the Escherichia coli-K12 genome corresponding to 50.0-68.8 min on the linkage map and analysis of its sequence features.</title>
        <authorList>
            <person name="Yamamoto Y."/>
            <person name="Aiba H."/>
            <person name="Baba T."/>
            <person name="Hayashi K."/>
            <person name="Inada T."/>
            <person name="Isono K."/>
            <person name="Itoh T."/>
            <person name="Kimura S."/>
            <person name="Kitagawa M."/>
            <person name="Makino K."/>
            <person name="Miki T."/>
            <person name="Mitsuhashi N."/>
            <person name="Mizobuchi K."/>
            <person name="Mori H."/>
            <person name="Nakade S."/>
            <person name="Nakamura Y."/>
            <person name="Nashimoto H."/>
            <person name="Oshima T."/>
            <person name="Oyama S."/>
            <person name="Saito N."/>
            <person name="Sampei G."/>
            <person name="Satoh Y."/>
            <person name="Sivasundaram S."/>
            <person name="Tagami H."/>
            <person name="Takahashi H."/>
            <person name="Takeda J."/>
            <person name="Takemoto K."/>
            <person name="Uehara K."/>
            <person name="Wada C."/>
            <person name="Yamagata S."/>
            <person name="Horiuchi T."/>
        </authorList>
    </citation>
    <scope>NUCLEOTIDE SEQUENCE [LARGE SCALE GENOMIC DNA]</scope>
    <source>
        <strain>K12 / W3110 / ATCC 27325 / DSM 5911</strain>
    </source>
</reference>
<reference key="3">
    <citation type="journal article" date="1997" name="Science">
        <title>The complete genome sequence of Escherichia coli K-12.</title>
        <authorList>
            <person name="Blattner F.R."/>
            <person name="Plunkett G. III"/>
            <person name="Bloch C.A."/>
            <person name="Perna N.T."/>
            <person name="Burland V."/>
            <person name="Riley M."/>
            <person name="Collado-Vides J."/>
            <person name="Glasner J.D."/>
            <person name="Rode C.K."/>
            <person name="Mayhew G.F."/>
            <person name="Gregor J."/>
            <person name="Davis N.W."/>
            <person name="Kirkpatrick H.A."/>
            <person name="Goeden M.A."/>
            <person name="Rose D.J."/>
            <person name="Mau B."/>
            <person name="Shao Y."/>
        </authorList>
    </citation>
    <scope>NUCLEOTIDE SEQUENCE [LARGE SCALE GENOMIC DNA]</scope>
    <source>
        <strain>K12 / MG1655 / ATCC 47076</strain>
    </source>
</reference>
<reference key="4">
    <citation type="journal article" date="2006" name="Mol. Syst. Biol.">
        <title>Highly accurate genome sequences of Escherichia coli K-12 strains MG1655 and W3110.</title>
        <authorList>
            <person name="Hayashi K."/>
            <person name="Morooka N."/>
            <person name="Yamamoto Y."/>
            <person name="Fujita K."/>
            <person name="Isono K."/>
            <person name="Choi S."/>
            <person name="Ohtsubo E."/>
            <person name="Baba T."/>
            <person name="Wanner B.L."/>
            <person name="Mori H."/>
            <person name="Horiuchi T."/>
        </authorList>
    </citation>
    <scope>NUCLEOTIDE SEQUENCE [LARGE SCALE GENOMIC DNA]</scope>
    <source>
        <strain>K12 / W3110 / ATCC 27325 / DSM 5911</strain>
    </source>
</reference>
<reference key="5">
    <citation type="journal article" date="2002" name="J. Biol. Chem.">
        <title>Oxidative decarboxylation of UDP-glucuronic acid in extracts of polymyxin-resistant Escherichia coli. Origin of lipid A species modified with 4-amino-4-deoxy-L-arabinose.</title>
        <authorList>
            <person name="Breazeale S.D."/>
            <person name="Ribeiro A.A."/>
            <person name="Raetz C.R.H."/>
        </authorList>
    </citation>
    <scope>FUNCTION</scope>
    <source>
        <strain>K12 / W3110 / ATCC 27325 / DSM 5911</strain>
    </source>
</reference>
<reference key="6">
    <citation type="journal article" date="2005" name="Science">
        <title>Global topology analysis of the Escherichia coli inner membrane proteome.</title>
        <authorList>
            <person name="Daley D.O."/>
            <person name="Rapp M."/>
            <person name="Granseth E."/>
            <person name="Melen K."/>
            <person name="Drew D."/>
            <person name="von Heijne G."/>
        </authorList>
    </citation>
    <scope>TOPOLOGY [LARGE SCALE ANALYSIS]</scope>
    <source>
        <strain>K12 / MG1655 / ATCC 47076</strain>
    </source>
</reference>
<reference key="7">
    <citation type="journal article" date="2007" name="J. Biol. Chem.">
        <title>An undecaprenyl phosphate-aminoarabinose flippase required for polymyxin resistance in Escherichia coli.</title>
        <authorList>
            <person name="Yan A."/>
            <person name="Guan Z."/>
            <person name="Raetz C.R.H."/>
        </authorList>
    </citation>
    <scope>PATHWAY</scope>
    <source>
        <strain>K12 / W3110 / ATCC 27325 / DSM 5911</strain>
    </source>
</reference>
<proteinExistence type="evidence at protein level"/>
<dbReference type="EC" id="2.4.2.53"/>
<dbReference type="EMBL" id="DQ011863">
    <property type="protein sequence ID" value="AAY34350.1"/>
    <property type="molecule type" value="Genomic_DNA"/>
</dbReference>
<dbReference type="EMBL" id="U00096">
    <property type="protein sequence ID" value="AAC75314.1"/>
    <property type="molecule type" value="Genomic_DNA"/>
</dbReference>
<dbReference type="EMBL" id="AP009048">
    <property type="protein sequence ID" value="BAA16077.1"/>
    <property type="molecule type" value="Genomic_DNA"/>
</dbReference>
<dbReference type="PIR" id="D64996">
    <property type="entry name" value="D64996"/>
</dbReference>
<dbReference type="RefSeq" id="NP_416757.1">
    <property type="nucleotide sequence ID" value="NC_000913.3"/>
</dbReference>
<dbReference type="RefSeq" id="WP_000461657.1">
    <property type="nucleotide sequence ID" value="NZ_LN832404.1"/>
</dbReference>
<dbReference type="SMR" id="P77757"/>
<dbReference type="BioGRID" id="4260496">
    <property type="interactions" value="318"/>
</dbReference>
<dbReference type="FunCoup" id="P77757">
    <property type="interactions" value="683"/>
</dbReference>
<dbReference type="IntAct" id="P77757">
    <property type="interactions" value="3"/>
</dbReference>
<dbReference type="STRING" id="511145.b2254"/>
<dbReference type="CAZy" id="GT2">
    <property type="family name" value="Glycosyltransferase Family 2"/>
</dbReference>
<dbReference type="TCDB" id="4.D.1.1.13">
    <property type="family name" value="the putative vectorial glycosyl polymerization (vgp) family"/>
</dbReference>
<dbReference type="jPOST" id="P77757"/>
<dbReference type="PaxDb" id="511145-b2254"/>
<dbReference type="EnsemblBacteria" id="AAC75314">
    <property type="protein sequence ID" value="AAC75314"/>
    <property type="gene ID" value="b2254"/>
</dbReference>
<dbReference type="GeneID" id="93774920"/>
<dbReference type="GeneID" id="945275"/>
<dbReference type="KEGG" id="ecj:JW2248"/>
<dbReference type="KEGG" id="eco:b2254"/>
<dbReference type="KEGG" id="ecoc:C3026_12590"/>
<dbReference type="PATRIC" id="fig|1411691.4.peg.4483"/>
<dbReference type="EchoBASE" id="EB3843"/>
<dbReference type="eggNOG" id="COG0463">
    <property type="taxonomic scope" value="Bacteria"/>
</dbReference>
<dbReference type="HOGENOM" id="CLU_033536_0_0_6"/>
<dbReference type="InParanoid" id="P77757"/>
<dbReference type="OMA" id="KFLTRPM"/>
<dbReference type="OrthoDB" id="9811884at2"/>
<dbReference type="PhylomeDB" id="P77757"/>
<dbReference type="BioCyc" id="EcoCyc:G7167-MONOMER"/>
<dbReference type="BioCyc" id="MetaCyc:G7167-MONOMER"/>
<dbReference type="UniPathway" id="UPA00030"/>
<dbReference type="UniPathway" id="UPA00036">
    <property type="reaction ID" value="UER00495"/>
</dbReference>
<dbReference type="PRO" id="PR:P77757"/>
<dbReference type="Proteomes" id="UP000000625">
    <property type="component" value="Chromosome"/>
</dbReference>
<dbReference type="GO" id="GO:0016020">
    <property type="term" value="C:membrane"/>
    <property type="evidence" value="ECO:0000314"/>
    <property type="project" value="EcoCyc"/>
</dbReference>
<dbReference type="GO" id="GO:0005886">
    <property type="term" value="C:plasma membrane"/>
    <property type="evidence" value="ECO:0000314"/>
    <property type="project" value="EcoCyc"/>
</dbReference>
<dbReference type="GO" id="GO:0016780">
    <property type="term" value="F:phosphotransferase activity, for other substituted phosphate groups"/>
    <property type="evidence" value="ECO:0007669"/>
    <property type="project" value="UniProtKB-UniRule"/>
</dbReference>
<dbReference type="GO" id="GO:0099621">
    <property type="term" value="F:undecaprenyl-phosphate 4-deoxy-4-formamido-L-arabinose transferase activity"/>
    <property type="evidence" value="ECO:0000314"/>
    <property type="project" value="EcoCyc"/>
</dbReference>
<dbReference type="GO" id="GO:0036108">
    <property type="term" value="P:4-amino-4-deoxy-alpha-L-arabinopyranosyl undecaprenyl phosphate biosynthetic process"/>
    <property type="evidence" value="ECO:0007669"/>
    <property type="project" value="UniProtKB-UniRule"/>
</dbReference>
<dbReference type="GO" id="GO:0009245">
    <property type="term" value="P:lipid A biosynthetic process"/>
    <property type="evidence" value="ECO:0007669"/>
    <property type="project" value="UniProtKB-UniRule"/>
</dbReference>
<dbReference type="GO" id="GO:0009103">
    <property type="term" value="P:lipopolysaccharide biosynthetic process"/>
    <property type="evidence" value="ECO:0007669"/>
    <property type="project" value="UniProtKB-UniRule"/>
</dbReference>
<dbReference type="GO" id="GO:0046677">
    <property type="term" value="P:response to antibiotic"/>
    <property type="evidence" value="ECO:0007669"/>
    <property type="project" value="UniProtKB-KW"/>
</dbReference>
<dbReference type="CDD" id="cd04187">
    <property type="entry name" value="DPM1_like_bac"/>
    <property type="match status" value="1"/>
</dbReference>
<dbReference type="FunFam" id="3.90.550.10:FF:000019">
    <property type="entry name" value="Undecaprenyl-phosphate 4-deoxy-4-formamido-L-arabinose transferase"/>
    <property type="match status" value="1"/>
</dbReference>
<dbReference type="Gene3D" id="3.90.550.10">
    <property type="entry name" value="Spore Coat Polysaccharide Biosynthesis Protein SpsA, Chain A"/>
    <property type="match status" value="1"/>
</dbReference>
<dbReference type="HAMAP" id="MF_01164">
    <property type="entry name" value="ArnC_transfer"/>
    <property type="match status" value="1"/>
</dbReference>
<dbReference type="InterPro" id="IPR022857">
    <property type="entry name" value="ArnC_tfrase"/>
</dbReference>
<dbReference type="InterPro" id="IPR001173">
    <property type="entry name" value="Glyco_trans_2-like"/>
</dbReference>
<dbReference type="InterPro" id="IPR050256">
    <property type="entry name" value="Glycosyltransferase_2"/>
</dbReference>
<dbReference type="InterPro" id="IPR029044">
    <property type="entry name" value="Nucleotide-diphossugar_trans"/>
</dbReference>
<dbReference type="NCBIfam" id="NF007986">
    <property type="entry name" value="PRK10714.1"/>
    <property type="match status" value="1"/>
</dbReference>
<dbReference type="PANTHER" id="PTHR48090:SF3">
    <property type="entry name" value="UNDECAPRENYL-PHOSPHATE 4-DEOXY-4-FORMAMIDO-L-ARABINOSE TRANSFERASE"/>
    <property type="match status" value="1"/>
</dbReference>
<dbReference type="PANTHER" id="PTHR48090">
    <property type="entry name" value="UNDECAPRENYL-PHOSPHATE 4-DEOXY-4-FORMAMIDO-L-ARABINOSE TRANSFERASE-RELATED"/>
    <property type="match status" value="1"/>
</dbReference>
<dbReference type="Pfam" id="PF00535">
    <property type="entry name" value="Glycos_transf_2"/>
    <property type="match status" value="1"/>
</dbReference>
<dbReference type="SUPFAM" id="SSF53448">
    <property type="entry name" value="Nucleotide-diphospho-sugar transferases"/>
    <property type="match status" value="1"/>
</dbReference>